<organism>
    <name type="scientific">Prochlorococcus marinus (strain MIT 9313)</name>
    <dbReference type="NCBI Taxonomy" id="74547"/>
    <lineage>
        <taxon>Bacteria</taxon>
        <taxon>Bacillati</taxon>
        <taxon>Cyanobacteriota</taxon>
        <taxon>Cyanophyceae</taxon>
        <taxon>Synechococcales</taxon>
        <taxon>Prochlorococcaceae</taxon>
        <taxon>Prochlorococcus</taxon>
    </lineage>
</organism>
<sequence>MSTPLMVLGTSSGAGKSLMSAALCRLLLRQGETPIPFKGQNMSNNAWVDESGGEMAYSQALQAWAAGLKPQCAMNPVLLKPQGDSTSEVIHLGQSVGTARAETYYEQWFRPGWSVIREALKDLQCSYTHGRLVLEGAGSPVEVNLQRRDLTNLRLAQFLRARCLLVADIERGGVFAQIMGTLSLLKPVEKQLIRGLLINRFRGRRELFDEGRDWLEAETGIPVIGVMPWLEELFPPEDSLDLLERRGKKNDAEIEIAVLKLPSLSNFSDLDPLEAEPTVQLRWVEPGTFLGMPDAVIIPGSKQTLRDLNSLNRSGLGSQLQTYAQSGGHVFGICGGMQMLGRTLADPLGLEGVTTTDPSSSMAGLNLLPLDTVFKRNKALSQCQRITQWPDNAKVKGFELHHGNSQLIQGSHESVLPMADDPSMGWVSKNESCGQVAGTYLHGIFENGRWRRLWLNLIRKQKGLADLPTDISNHEQQREQLLNRLADVFEEHVNINPLLGT</sequence>
<protein>
    <recommendedName>
        <fullName evidence="1">Cobyric acid synthase</fullName>
    </recommendedName>
</protein>
<name>COBQ_PROMM</name>
<evidence type="ECO:0000255" key="1">
    <source>
        <dbReference type="HAMAP-Rule" id="MF_00028"/>
    </source>
</evidence>
<comment type="function">
    <text evidence="1">Catalyzes amidations at positions B, D, E, and G on adenosylcobyrinic A,C-diamide. NH(2) groups are provided by glutamine, and one molecule of ATP is hydrogenolyzed for each amidation.</text>
</comment>
<comment type="pathway">
    <text evidence="1">Cofactor biosynthesis; adenosylcobalamin biosynthesis.</text>
</comment>
<comment type="similarity">
    <text evidence="1">Belongs to the CobB/CobQ family. CobQ subfamily.</text>
</comment>
<gene>
    <name evidence="1" type="primary">cobQ</name>
    <name type="ordered locus">PMT_1183</name>
</gene>
<feature type="chain" id="PRO_0000141318" description="Cobyric acid synthase">
    <location>
        <begin position="1"/>
        <end position="501"/>
    </location>
</feature>
<feature type="domain" description="GATase cobBQ-type" evidence="1">
    <location>
        <begin position="253"/>
        <end position="450"/>
    </location>
</feature>
<feature type="active site" description="Nucleophile" evidence="1">
    <location>
        <position position="334"/>
    </location>
</feature>
<feature type="active site" evidence="1">
    <location>
        <position position="442"/>
    </location>
</feature>
<dbReference type="EMBL" id="BX548175">
    <property type="protein sequence ID" value="CAE21358.1"/>
    <property type="molecule type" value="Genomic_DNA"/>
</dbReference>
<dbReference type="RefSeq" id="WP_011130554.1">
    <property type="nucleotide sequence ID" value="NC_005071.1"/>
</dbReference>
<dbReference type="KEGG" id="pmt:PMT_1183"/>
<dbReference type="eggNOG" id="COG1492">
    <property type="taxonomic scope" value="Bacteria"/>
</dbReference>
<dbReference type="HOGENOM" id="CLU_019250_2_2_3"/>
<dbReference type="OrthoDB" id="9808302at2"/>
<dbReference type="UniPathway" id="UPA00148"/>
<dbReference type="Proteomes" id="UP000001423">
    <property type="component" value="Chromosome"/>
</dbReference>
<dbReference type="GO" id="GO:0015420">
    <property type="term" value="F:ABC-type vitamin B12 transporter activity"/>
    <property type="evidence" value="ECO:0007669"/>
    <property type="project" value="UniProtKB-UniRule"/>
</dbReference>
<dbReference type="GO" id="GO:0003824">
    <property type="term" value="F:catalytic activity"/>
    <property type="evidence" value="ECO:0007669"/>
    <property type="project" value="InterPro"/>
</dbReference>
<dbReference type="GO" id="GO:0009236">
    <property type="term" value="P:cobalamin biosynthetic process"/>
    <property type="evidence" value="ECO:0007669"/>
    <property type="project" value="UniProtKB-UniRule"/>
</dbReference>
<dbReference type="CDD" id="cd01750">
    <property type="entry name" value="GATase1_CobQ"/>
    <property type="match status" value="1"/>
</dbReference>
<dbReference type="Gene3D" id="3.40.50.880">
    <property type="match status" value="1"/>
</dbReference>
<dbReference type="Gene3D" id="3.40.50.300">
    <property type="entry name" value="P-loop containing nucleotide triphosphate hydrolases"/>
    <property type="match status" value="1"/>
</dbReference>
<dbReference type="HAMAP" id="MF_00028">
    <property type="entry name" value="CobQ"/>
    <property type="match status" value="1"/>
</dbReference>
<dbReference type="InterPro" id="IPR029062">
    <property type="entry name" value="Class_I_gatase-like"/>
</dbReference>
<dbReference type="InterPro" id="IPR002586">
    <property type="entry name" value="CobQ/CobB/MinD/ParA_Nub-bd_dom"/>
</dbReference>
<dbReference type="InterPro" id="IPR033949">
    <property type="entry name" value="CobQ_GATase1"/>
</dbReference>
<dbReference type="InterPro" id="IPR004459">
    <property type="entry name" value="CobQ_synth"/>
</dbReference>
<dbReference type="InterPro" id="IPR011698">
    <property type="entry name" value="GATase_3"/>
</dbReference>
<dbReference type="InterPro" id="IPR027417">
    <property type="entry name" value="P-loop_NTPase"/>
</dbReference>
<dbReference type="NCBIfam" id="TIGR00313">
    <property type="entry name" value="cobQ"/>
    <property type="match status" value="1"/>
</dbReference>
<dbReference type="NCBIfam" id="NF001989">
    <property type="entry name" value="PRK00784.1"/>
    <property type="match status" value="1"/>
</dbReference>
<dbReference type="PANTHER" id="PTHR21343:SF1">
    <property type="entry name" value="COBYRIC ACID SYNTHASE"/>
    <property type="match status" value="1"/>
</dbReference>
<dbReference type="PANTHER" id="PTHR21343">
    <property type="entry name" value="DETHIOBIOTIN SYNTHETASE"/>
    <property type="match status" value="1"/>
</dbReference>
<dbReference type="Pfam" id="PF01656">
    <property type="entry name" value="CbiA"/>
    <property type="match status" value="1"/>
</dbReference>
<dbReference type="Pfam" id="PF07685">
    <property type="entry name" value="GATase_3"/>
    <property type="match status" value="1"/>
</dbReference>
<dbReference type="SUPFAM" id="SSF52317">
    <property type="entry name" value="Class I glutamine amidotransferase-like"/>
    <property type="match status" value="1"/>
</dbReference>
<dbReference type="SUPFAM" id="SSF52540">
    <property type="entry name" value="P-loop containing nucleoside triphosphate hydrolases"/>
    <property type="match status" value="1"/>
</dbReference>
<dbReference type="PROSITE" id="PS51274">
    <property type="entry name" value="GATASE_COBBQ"/>
    <property type="match status" value="1"/>
</dbReference>
<reference key="1">
    <citation type="journal article" date="2003" name="Nature">
        <title>Genome divergence in two Prochlorococcus ecotypes reflects oceanic niche differentiation.</title>
        <authorList>
            <person name="Rocap G."/>
            <person name="Larimer F.W."/>
            <person name="Lamerdin J.E."/>
            <person name="Malfatti S."/>
            <person name="Chain P."/>
            <person name="Ahlgren N.A."/>
            <person name="Arellano A."/>
            <person name="Coleman M."/>
            <person name="Hauser L."/>
            <person name="Hess W.R."/>
            <person name="Johnson Z.I."/>
            <person name="Land M.L."/>
            <person name="Lindell D."/>
            <person name="Post A.F."/>
            <person name="Regala W."/>
            <person name="Shah M."/>
            <person name="Shaw S.L."/>
            <person name="Steglich C."/>
            <person name="Sullivan M.B."/>
            <person name="Ting C.S."/>
            <person name="Tolonen A."/>
            <person name="Webb E.A."/>
            <person name="Zinser E.R."/>
            <person name="Chisholm S.W."/>
        </authorList>
    </citation>
    <scope>NUCLEOTIDE SEQUENCE [LARGE SCALE GENOMIC DNA]</scope>
    <source>
        <strain>MIT 9313</strain>
    </source>
</reference>
<keyword id="KW-0169">Cobalamin biosynthesis</keyword>
<keyword id="KW-0315">Glutamine amidotransferase</keyword>
<keyword id="KW-1185">Reference proteome</keyword>
<proteinExistence type="inferred from homology"/>
<accession>Q7V6H6</accession>